<reference key="1">
    <citation type="journal article" date="2004" name="Nature">
        <title>Genome evolution in yeasts.</title>
        <authorList>
            <person name="Dujon B."/>
            <person name="Sherman D."/>
            <person name="Fischer G."/>
            <person name="Durrens P."/>
            <person name="Casaregola S."/>
            <person name="Lafontaine I."/>
            <person name="de Montigny J."/>
            <person name="Marck C."/>
            <person name="Neuveglise C."/>
            <person name="Talla E."/>
            <person name="Goffard N."/>
            <person name="Frangeul L."/>
            <person name="Aigle M."/>
            <person name="Anthouard V."/>
            <person name="Babour A."/>
            <person name="Barbe V."/>
            <person name="Barnay S."/>
            <person name="Blanchin S."/>
            <person name="Beckerich J.-M."/>
            <person name="Beyne E."/>
            <person name="Bleykasten C."/>
            <person name="Boisrame A."/>
            <person name="Boyer J."/>
            <person name="Cattolico L."/>
            <person name="Confanioleri F."/>
            <person name="de Daruvar A."/>
            <person name="Despons L."/>
            <person name="Fabre E."/>
            <person name="Fairhead C."/>
            <person name="Ferry-Dumazet H."/>
            <person name="Groppi A."/>
            <person name="Hantraye F."/>
            <person name="Hennequin C."/>
            <person name="Jauniaux N."/>
            <person name="Joyet P."/>
            <person name="Kachouri R."/>
            <person name="Kerrest A."/>
            <person name="Koszul R."/>
            <person name="Lemaire M."/>
            <person name="Lesur I."/>
            <person name="Ma L."/>
            <person name="Muller H."/>
            <person name="Nicaud J.-M."/>
            <person name="Nikolski M."/>
            <person name="Oztas S."/>
            <person name="Ozier-Kalogeropoulos O."/>
            <person name="Pellenz S."/>
            <person name="Potier S."/>
            <person name="Richard G.-F."/>
            <person name="Straub M.-L."/>
            <person name="Suleau A."/>
            <person name="Swennen D."/>
            <person name="Tekaia F."/>
            <person name="Wesolowski-Louvel M."/>
            <person name="Westhof E."/>
            <person name="Wirth B."/>
            <person name="Zeniou-Meyer M."/>
            <person name="Zivanovic Y."/>
            <person name="Bolotin-Fukuhara M."/>
            <person name="Thierry A."/>
            <person name="Bouchier C."/>
            <person name="Caudron B."/>
            <person name="Scarpelli C."/>
            <person name="Gaillardin C."/>
            <person name="Weissenbach J."/>
            <person name="Wincker P."/>
            <person name="Souciet J.-L."/>
        </authorList>
    </citation>
    <scope>NUCLEOTIDE SEQUENCE [LARGE SCALE GENOMIC DNA]</scope>
    <source>
        <strain>ATCC 2001 / BCRC 20586 / JCM 3761 / NBRC 0622 / NRRL Y-65 / CBS 138</strain>
    </source>
</reference>
<name>FMP46_CANGA</name>
<organism>
    <name type="scientific">Candida glabrata (strain ATCC 2001 / BCRC 20586 / JCM 3761 / NBRC 0622 / NRRL Y-65 / CBS 138)</name>
    <name type="common">Yeast</name>
    <name type="synonym">Nakaseomyces glabratus</name>
    <dbReference type="NCBI Taxonomy" id="284593"/>
    <lineage>
        <taxon>Eukaryota</taxon>
        <taxon>Fungi</taxon>
        <taxon>Dikarya</taxon>
        <taxon>Ascomycota</taxon>
        <taxon>Saccharomycotina</taxon>
        <taxon>Saccharomycetes</taxon>
        <taxon>Saccharomycetales</taxon>
        <taxon>Saccharomycetaceae</taxon>
        <taxon>Nakaseomyces</taxon>
    </lineage>
</organism>
<dbReference type="EC" id="1.-.-.-"/>
<dbReference type="EMBL" id="CR380959">
    <property type="protein sequence ID" value="CAG62581.1"/>
    <property type="molecule type" value="Genomic_DNA"/>
</dbReference>
<dbReference type="RefSeq" id="XP_449605.1">
    <property type="nucleotide sequence ID" value="XM_449605.1"/>
</dbReference>
<dbReference type="SMR" id="Q6FJI9"/>
<dbReference type="FunCoup" id="Q6FJI9">
    <property type="interactions" value="74"/>
</dbReference>
<dbReference type="EnsemblFungi" id="CAGL0M05951g-T">
    <property type="protein sequence ID" value="CAGL0M05951g-T-p1"/>
    <property type="gene ID" value="CAGL0M05951g"/>
</dbReference>
<dbReference type="KEGG" id="cgr:2891653"/>
<dbReference type="CGD" id="CAL0137471">
    <property type="gene designation" value="CAGL0M05951g"/>
</dbReference>
<dbReference type="VEuPathDB" id="FungiDB:B1J91_M05951g"/>
<dbReference type="VEuPathDB" id="FungiDB:CAGL0M05951g"/>
<dbReference type="eggNOG" id="ENOG502S4SU">
    <property type="taxonomic scope" value="Eukaryota"/>
</dbReference>
<dbReference type="HOGENOM" id="CLU_1939538_0_0_1"/>
<dbReference type="InParanoid" id="Q6FJI9"/>
<dbReference type="OMA" id="LWVDWEK"/>
<dbReference type="Proteomes" id="UP000002428">
    <property type="component" value="Chromosome M"/>
</dbReference>
<dbReference type="GO" id="GO:0005739">
    <property type="term" value="C:mitochondrion"/>
    <property type="evidence" value="ECO:0007669"/>
    <property type="project" value="UniProtKB-SubCell"/>
</dbReference>
<dbReference type="GO" id="GO:0016491">
    <property type="term" value="F:oxidoreductase activity"/>
    <property type="evidence" value="ECO:0007669"/>
    <property type="project" value="UniProtKB-KW"/>
</dbReference>
<dbReference type="GO" id="GO:0051051">
    <property type="term" value="P:negative regulation of transport"/>
    <property type="evidence" value="ECO:0007669"/>
    <property type="project" value="EnsemblFungi"/>
</dbReference>
<dbReference type="Gene3D" id="3.40.30.10">
    <property type="entry name" value="Glutaredoxin"/>
    <property type="match status" value="1"/>
</dbReference>
<dbReference type="InterPro" id="IPR012882">
    <property type="entry name" value="Fmp46"/>
</dbReference>
<dbReference type="InterPro" id="IPR036249">
    <property type="entry name" value="Thioredoxin-like_sf"/>
</dbReference>
<dbReference type="PANTHER" id="PTHR28071">
    <property type="entry name" value="REDOX PROTEIN FMP46, MITOCHONDRIAL-RELATED"/>
    <property type="match status" value="1"/>
</dbReference>
<dbReference type="PANTHER" id="PTHR28071:SF1">
    <property type="entry name" value="REDOX PROTEIN FMP46, MITOCHONDRIAL-RELATED"/>
    <property type="match status" value="1"/>
</dbReference>
<dbReference type="Pfam" id="PF07955">
    <property type="entry name" value="DUF1687"/>
    <property type="match status" value="1"/>
</dbReference>
<dbReference type="SUPFAM" id="SSF52833">
    <property type="entry name" value="Thioredoxin-like"/>
    <property type="match status" value="1"/>
</dbReference>
<feature type="transit peptide" description="Mitochondrion" evidence="2">
    <location>
        <begin position="1"/>
        <end position="21"/>
    </location>
</feature>
<feature type="chain" id="PRO_0000292447" description="Putative redox protein FMP46, mitochondrial">
    <location>
        <begin position="22"/>
        <end position="129"/>
    </location>
</feature>
<feature type="active site" evidence="3">
    <location>
        <position position="94"/>
    </location>
</feature>
<keyword id="KW-0496">Mitochondrion</keyword>
<keyword id="KW-0560">Oxidoreductase</keyword>
<keyword id="KW-1185">Reference proteome</keyword>
<keyword id="KW-0809">Transit peptide</keyword>
<accession>Q6FJI9</accession>
<evidence type="ECO:0000250" key="1"/>
<evidence type="ECO:0000255" key="2"/>
<evidence type="ECO:0000305" key="3"/>
<proteinExistence type="inferred from homology"/>
<comment type="function">
    <text evidence="1">Putative mitochondrial redox protein which could be involved in the reduction of small toxic molecules.</text>
</comment>
<comment type="subcellular location">
    <subcellularLocation>
        <location evidence="1">Mitochondrion</location>
    </subcellularLocation>
</comment>
<comment type="similarity">
    <text evidence="3">Belongs to the FMP46 family.</text>
</comment>
<protein>
    <recommendedName>
        <fullName>Putative redox protein FMP46, mitochondrial</fullName>
        <ecNumber>1.-.-.-</ecNumber>
    </recommendedName>
</protein>
<gene>
    <name type="primary">FMP46</name>
    <name type="ordered locus">CAGL0M05951g</name>
</gene>
<sequence>MSMFRTLQRQPRTISLFTHDLENSRPCLSILEYLKSHTTNRFDLELSTKFPTLDQVHYMNAINPMILRAQIPHLTKIMKLKSYDPLFGSQLSDCVTKGFWNKEAPLWVDWEKKALGTDLQSIKELLEKD</sequence>